<comment type="function">
    <text evidence="1">Component of the serine palmitoyltransferase multisubunit enzyme (SPT) that catalyzes the initial and rate-limiting step in sphingolipid biosynthesis by condensing L-serine and activated acyl-CoA (most commonly palmitoyl-CoA) to form long-chain bases. The SPT complex is composed of SPTLC1, SPTLC2 or SPTLC3 and SPTSSA or SPTSSB. Within this complex, the heterodimer consisting of SPTLC1 and SPTLC2/SPTLC3 forms the catalytic core. Within the SPT complex, SPTSSA stimulates the catalytic activity and plays a role in substrate specificity, which depends upon the overall complex composition. The SPTLC1-SPTLC2-SPTSSA complex shows a strong preference for C16-CoA substrate, while the SPTLC1-SPTLC3-SPTSSA isozyme uses both C14-CoA and C16-CoA as substrates, with a slight preference for C14-CoA. Independently of its action as a SPT component, may be involved in MBOAT7 localization to mitochondria-associated membranes, a membrane bridge between the endoplasmic reticulum and mitochondria, may hence affect MBOAT7-catalyzed incorporation of arachidonic acid into phosphatidylinositol.</text>
</comment>
<comment type="pathway">
    <text>Lipid metabolism; sphingolipid metabolism.</text>
</comment>
<comment type="subunit">
    <text evidence="1">Component of the serine palmitoyltransferase (SPT) complex, which is composed of SPTLC1, SPTLC2 or SPTLC3 and SPTSSA or SPTSSB. The heterodimer consisting of SPTLC1 and SPTLC2/SPTLC3 forms the catalytic core of the enzyme, while SPTSSA or SPTSSB subunits determine substrate specificity. SPT also interacts with ORMDL proteins, especially ORMDL3, which negatively regulate SPT activity in the presence of ceramides. Interacts with MBOAT7; the interaction plays a role in MBOAT7 localization to mitochondria-associated membranes.</text>
</comment>
<comment type="subcellular location">
    <subcellularLocation>
        <location evidence="3">Endoplasmic reticulum membrane</location>
        <topology evidence="3">Multi-pass membrane protein</topology>
    </subcellularLocation>
</comment>
<comment type="similarity">
    <text evidence="3">Belongs to the SPTSS family. SPTSSA subfamily.</text>
</comment>
<comment type="caution">
    <text evidence="3">It is uncertain whether Met-1 or Met-4 is the initiator.</text>
</comment>
<comment type="sequence caution" evidence="3">
    <conflict type="erroneous initiation">
        <sequence resource="EMBL-CDS" id="AAH22674"/>
    </conflict>
    <text>Truncated N-terminus.</text>
</comment>
<comment type="sequence caution" evidence="3">
    <conflict type="erroneous initiation">
        <sequence resource="EMBL-CDS" id="BAC25023"/>
    </conflict>
    <text>Truncated N-terminus.</text>
</comment>
<comment type="sequence caution" evidence="3">
    <conflict type="erroneous initiation">
        <sequence resource="EMBL-CDS" id="BAC25026"/>
    </conflict>
    <text>Truncated N-terminus.</text>
</comment>
<comment type="sequence caution" evidence="3">
    <conflict type="erroneous initiation">
        <sequence resource="EMBL-CDS" id="BAC25233"/>
    </conflict>
    <text>Truncated N-terminus.</text>
</comment>
<comment type="sequence caution" evidence="3">
    <conflict type="erroneous initiation">
        <sequence resource="EMBL-CDS" id="BAC25555"/>
    </conflict>
    <text>Truncated N-terminus.</text>
</comment>
<gene>
    <name evidence="4" type="primary">Sptssa</name>
    <name type="synonym">Ssspta</name>
</gene>
<accession>Q8R207</accession>
<accession>Q8BHT2</accession>
<reference key="1">
    <citation type="journal article" date="2005" name="Science">
        <title>The transcriptional landscape of the mammalian genome.</title>
        <authorList>
            <person name="Carninci P."/>
            <person name="Kasukawa T."/>
            <person name="Katayama S."/>
            <person name="Gough J."/>
            <person name="Frith M.C."/>
            <person name="Maeda N."/>
            <person name="Oyama R."/>
            <person name="Ravasi T."/>
            <person name="Lenhard B."/>
            <person name="Wells C."/>
            <person name="Kodzius R."/>
            <person name="Shimokawa K."/>
            <person name="Bajic V.B."/>
            <person name="Brenner S.E."/>
            <person name="Batalov S."/>
            <person name="Forrest A.R."/>
            <person name="Zavolan M."/>
            <person name="Davis M.J."/>
            <person name="Wilming L.G."/>
            <person name="Aidinis V."/>
            <person name="Allen J.E."/>
            <person name="Ambesi-Impiombato A."/>
            <person name="Apweiler R."/>
            <person name="Aturaliya R.N."/>
            <person name="Bailey T.L."/>
            <person name="Bansal M."/>
            <person name="Baxter L."/>
            <person name="Beisel K.W."/>
            <person name="Bersano T."/>
            <person name="Bono H."/>
            <person name="Chalk A.M."/>
            <person name="Chiu K.P."/>
            <person name="Choudhary V."/>
            <person name="Christoffels A."/>
            <person name="Clutterbuck D.R."/>
            <person name="Crowe M.L."/>
            <person name="Dalla E."/>
            <person name="Dalrymple B.P."/>
            <person name="de Bono B."/>
            <person name="Della Gatta G."/>
            <person name="di Bernardo D."/>
            <person name="Down T."/>
            <person name="Engstrom P."/>
            <person name="Fagiolini M."/>
            <person name="Faulkner G."/>
            <person name="Fletcher C.F."/>
            <person name="Fukushima T."/>
            <person name="Furuno M."/>
            <person name="Futaki S."/>
            <person name="Gariboldi M."/>
            <person name="Georgii-Hemming P."/>
            <person name="Gingeras T.R."/>
            <person name="Gojobori T."/>
            <person name="Green R.E."/>
            <person name="Gustincich S."/>
            <person name="Harbers M."/>
            <person name="Hayashi Y."/>
            <person name="Hensch T.K."/>
            <person name="Hirokawa N."/>
            <person name="Hill D."/>
            <person name="Huminiecki L."/>
            <person name="Iacono M."/>
            <person name="Ikeo K."/>
            <person name="Iwama A."/>
            <person name="Ishikawa T."/>
            <person name="Jakt M."/>
            <person name="Kanapin A."/>
            <person name="Katoh M."/>
            <person name="Kawasawa Y."/>
            <person name="Kelso J."/>
            <person name="Kitamura H."/>
            <person name="Kitano H."/>
            <person name="Kollias G."/>
            <person name="Krishnan S.P."/>
            <person name="Kruger A."/>
            <person name="Kummerfeld S.K."/>
            <person name="Kurochkin I.V."/>
            <person name="Lareau L.F."/>
            <person name="Lazarevic D."/>
            <person name="Lipovich L."/>
            <person name="Liu J."/>
            <person name="Liuni S."/>
            <person name="McWilliam S."/>
            <person name="Madan Babu M."/>
            <person name="Madera M."/>
            <person name="Marchionni L."/>
            <person name="Matsuda H."/>
            <person name="Matsuzawa S."/>
            <person name="Miki H."/>
            <person name="Mignone F."/>
            <person name="Miyake S."/>
            <person name="Morris K."/>
            <person name="Mottagui-Tabar S."/>
            <person name="Mulder N."/>
            <person name="Nakano N."/>
            <person name="Nakauchi H."/>
            <person name="Ng P."/>
            <person name="Nilsson R."/>
            <person name="Nishiguchi S."/>
            <person name="Nishikawa S."/>
            <person name="Nori F."/>
            <person name="Ohara O."/>
            <person name="Okazaki Y."/>
            <person name="Orlando V."/>
            <person name="Pang K.C."/>
            <person name="Pavan W.J."/>
            <person name="Pavesi G."/>
            <person name="Pesole G."/>
            <person name="Petrovsky N."/>
            <person name="Piazza S."/>
            <person name="Reed J."/>
            <person name="Reid J.F."/>
            <person name="Ring B.Z."/>
            <person name="Ringwald M."/>
            <person name="Rost B."/>
            <person name="Ruan Y."/>
            <person name="Salzberg S.L."/>
            <person name="Sandelin A."/>
            <person name="Schneider C."/>
            <person name="Schoenbach C."/>
            <person name="Sekiguchi K."/>
            <person name="Semple C.A."/>
            <person name="Seno S."/>
            <person name="Sessa L."/>
            <person name="Sheng Y."/>
            <person name="Shibata Y."/>
            <person name="Shimada H."/>
            <person name="Shimada K."/>
            <person name="Silva D."/>
            <person name="Sinclair B."/>
            <person name="Sperling S."/>
            <person name="Stupka E."/>
            <person name="Sugiura K."/>
            <person name="Sultana R."/>
            <person name="Takenaka Y."/>
            <person name="Taki K."/>
            <person name="Tammoja K."/>
            <person name="Tan S.L."/>
            <person name="Tang S."/>
            <person name="Taylor M.S."/>
            <person name="Tegner J."/>
            <person name="Teichmann S.A."/>
            <person name="Ueda H.R."/>
            <person name="van Nimwegen E."/>
            <person name="Verardo R."/>
            <person name="Wei C.L."/>
            <person name="Yagi K."/>
            <person name="Yamanishi H."/>
            <person name="Zabarovsky E."/>
            <person name="Zhu S."/>
            <person name="Zimmer A."/>
            <person name="Hide W."/>
            <person name="Bult C."/>
            <person name="Grimmond S.M."/>
            <person name="Teasdale R.D."/>
            <person name="Liu E.T."/>
            <person name="Brusic V."/>
            <person name="Quackenbush J."/>
            <person name="Wahlestedt C."/>
            <person name="Mattick J.S."/>
            <person name="Hume D.A."/>
            <person name="Kai C."/>
            <person name="Sasaki D."/>
            <person name="Tomaru Y."/>
            <person name="Fukuda S."/>
            <person name="Kanamori-Katayama M."/>
            <person name="Suzuki M."/>
            <person name="Aoki J."/>
            <person name="Arakawa T."/>
            <person name="Iida J."/>
            <person name="Imamura K."/>
            <person name="Itoh M."/>
            <person name="Kato T."/>
            <person name="Kawaji H."/>
            <person name="Kawagashira N."/>
            <person name="Kawashima T."/>
            <person name="Kojima M."/>
            <person name="Kondo S."/>
            <person name="Konno H."/>
            <person name="Nakano K."/>
            <person name="Ninomiya N."/>
            <person name="Nishio T."/>
            <person name="Okada M."/>
            <person name="Plessy C."/>
            <person name="Shibata K."/>
            <person name="Shiraki T."/>
            <person name="Suzuki S."/>
            <person name="Tagami M."/>
            <person name="Waki K."/>
            <person name="Watahiki A."/>
            <person name="Okamura-Oho Y."/>
            <person name="Suzuki H."/>
            <person name="Kawai J."/>
            <person name="Hayashizaki Y."/>
        </authorList>
    </citation>
    <scope>NUCLEOTIDE SEQUENCE [LARGE SCALE MRNA]</scope>
    <source>
        <strain>C57BL/6J</strain>
        <tissue>Lung</tissue>
        <tissue>Stomach</tissue>
    </source>
</reference>
<reference key="2">
    <citation type="journal article" date="2004" name="Genome Res.">
        <title>The status, quality, and expansion of the NIH full-length cDNA project: the Mammalian Gene Collection (MGC).</title>
        <authorList>
            <consortium name="The MGC Project Team"/>
        </authorList>
    </citation>
    <scope>NUCLEOTIDE SEQUENCE [LARGE SCALE MRNA]</scope>
    <source>
        <strain>FVB/N</strain>
        <tissue>Kidney</tissue>
    </source>
</reference>
<feature type="chain" id="PRO_0000089950" description="Serine palmitoyltransferase small subunit A">
    <location>
        <begin position="1"/>
        <end position="71"/>
    </location>
</feature>
<feature type="topological domain" description="Cytoplasmic" evidence="2">
    <location>
        <begin position="1"/>
        <end position="12"/>
    </location>
</feature>
<feature type="transmembrane region" description="Helical" evidence="2">
    <location>
        <begin position="13"/>
        <end position="29"/>
    </location>
</feature>
<feature type="topological domain" description="Lumenal" evidence="2">
    <location>
        <begin position="30"/>
        <end position="34"/>
    </location>
</feature>
<feature type="transmembrane region" description="Helical" evidence="2">
    <location>
        <begin position="35"/>
        <end position="57"/>
    </location>
</feature>
<feature type="topological domain" description="Cytoplasmic" evidence="2">
    <location>
        <begin position="58"/>
        <end position="71"/>
    </location>
</feature>
<feature type="site" description="Within the serine palmitoyltransferase (SPT) complex, defines the length of the acyl chain-binding pocket, determining the acyl-CoA substrate preference" evidence="1">
    <location>
        <position position="28"/>
    </location>
</feature>
<feature type="sequence conflict" description="In Ref. 1; BAC25026." evidence="3" ref="1">
    <original>A</original>
    <variation>S</variation>
    <location>
        <position position="9"/>
    </location>
</feature>
<organism>
    <name type="scientific">Mus musculus</name>
    <name type="common">Mouse</name>
    <dbReference type="NCBI Taxonomy" id="10090"/>
    <lineage>
        <taxon>Eukaryota</taxon>
        <taxon>Metazoa</taxon>
        <taxon>Chordata</taxon>
        <taxon>Craniata</taxon>
        <taxon>Vertebrata</taxon>
        <taxon>Euteleostomi</taxon>
        <taxon>Mammalia</taxon>
        <taxon>Eutheria</taxon>
        <taxon>Euarchontoglires</taxon>
        <taxon>Glires</taxon>
        <taxon>Rodentia</taxon>
        <taxon>Myomorpha</taxon>
        <taxon>Muroidea</taxon>
        <taxon>Muridae</taxon>
        <taxon>Murinae</taxon>
        <taxon>Mus</taxon>
        <taxon>Mus</taxon>
    </lineage>
</organism>
<protein>
    <recommendedName>
        <fullName evidence="3">Serine palmitoyltransferase small subunit A</fullName>
    </recommendedName>
    <alternativeName>
        <fullName>Small subunit of serine palmitoyltransferase A</fullName>
        <shortName>ssSPTa</shortName>
    </alternativeName>
</protein>
<name>SPTSA_MOUSE</name>
<keyword id="KW-0256">Endoplasmic reticulum</keyword>
<keyword id="KW-0443">Lipid metabolism</keyword>
<keyword id="KW-0472">Membrane</keyword>
<keyword id="KW-1185">Reference proteome</keyword>
<keyword id="KW-0746">Sphingolipid metabolism</keyword>
<keyword id="KW-0812">Transmembrane</keyword>
<keyword id="KW-1133">Transmembrane helix</keyword>
<dbReference type="EMBL" id="AK003171">
    <property type="protein sequence ID" value="BAC25023.1"/>
    <property type="status" value="ALT_INIT"/>
    <property type="molecule type" value="mRNA"/>
</dbReference>
<dbReference type="EMBL" id="AK003275">
    <property type="protein sequence ID" value="BAC25026.1"/>
    <property type="status" value="ALT_INIT"/>
    <property type="molecule type" value="mRNA"/>
</dbReference>
<dbReference type="EMBL" id="AK008904">
    <property type="protein sequence ID" value="BAC25233.1"/>
    <property type="status" value="ALT_INIT"/>
    <property type="molecule type" value="mRNA"/>
</dbReference>
<dbReference type="EMBL" id="AK018380">
    <property type="protein sequence ID" value="BAC25555.1"/>
    <property type="status" value="ALT_INIT"/>
    <property type="molecule type" value="mRNA"/>
</dbReference>
<dbReference type="EMBL" id="BC022674">
    <property type="protein sequence ID" value="AAH22674.1"/>
    <property type="status" value="ALT_INIT"/>
    <property type="molecule type" value="mRNA"/>
</dbReference>
<dbReference type="CCDS" id="CCDS36445.1"/>
<dbReference type="RefSeq" id="NP_598815.2">
    <property type="nucleotide sequence ID" value="NM_134054.2"/>
</dbReference>
<dbReference type="SMR" id="Q8R207"/>
<dbReference type="BioGRID" id="222685">
    <property type="interactions" value="1"/>
</dbReference>
<dbReference type="FunCoup" id="Q8R207">
    <property type="interactions" value="465"/>
</dbReference>
<dbReference type="STRING" id="10090.ENSMUSP00000053671"/>
<dbReference type="PaxDb" id="10090-ENSMUSP00000053671"/>
<dbReference type="DNASU" id="104725"/>
<dbReference type="Ensembl" id="ENSMUST00000056228.8">
    <property type="protein sequence ID" value="ENSMUSP00000053671.7"/>
    <property type="gene ID" value="ENSMUSG00000044408.8"/>
</dbReference>
<dbReference type="GeneID" id="104725"/>
<dbReference type="KEGG" id="mmu:104725"/>
<dbReference type="UCSC" id="uc007nnt.1">
    <property type="organism name" value="mouse"/>
</dbReference>
<dbReference type="AGR" id="MGI:1913399"/>
<dbReference type="CTD" id="171546"/>
<dbReference type="MGI" id="MGI:1913399">
    <property type="gene designation" value="Sptssa"/>
</dbReference>
<dbReference type="VEuPathDB" id="HostDB:ENSMUSG00000044408"/>
<dbReference type="eggNOG" id="ENOG502S4Q3">
    <property type="taxonomic scope" value="Eukaryota"/>
</dbReference>
<dbReference type="GeneTree" id="ENSGT00390000002766"/>
<dbReference type="HOGENOM" id="CLU_187811_1_0_1"/>
<dbReference type="InParanoid" id="Q8R207"/>
<dbReference type="OMA" id="LEPVERW"/>
<dbReference type="OrthoDB" id="17236at9989"/>
<dbReference type="PhylomeDB" id="Q8R207"/>
<dbReference type="TreeFam" id="TF328418"/>
<dbReference type="Reactome" id="R-MMU-1660661">
    <property type="pathway name" value="Sphingolipid de novo biosynthesis"/>
</dbReference>
<dbReference type="UniPathway" id="UPA00222"/>
<dbReference type="BioGRID-ORCS" id="104725">
    <property type="hits" value="13 hits in 78 CRISPR screens"/>
</dbReference>
<dbReference type="ChiTaRS" id="Sptssa">
    <property type="organism name" value="mouse"/>
</dbReference>
<dbReference type="PRO" id="PR:Q8R207"/>
<dbReference type="Proteomes" id="UP000000589">
    <property type="component" value="Chromosome 12"/>
</dbReference>
<dbReference type="RNAct" id="Q8R207">
    <property type="molecule type" value="protein"/>
</dbReference>
<dbReference type="Bgee" id="ENSMUSG00000044408">
    <property type="expression patterns" value="Expressed in lip and 67 other cell types or tissues"/>
</dbReference>
<dbReference type="ExpressionAtlas" id="Q8R207">
    <property type="expression patterns" value="baseline and differential"/>
</dbReference>
<dbReference type="GO" id="GO:0005783">
    <property type="term" value="C:endoplasmic reticulum"/>
    <property type="evidence" value="ECO:0000250"/>
    <property type="project" value="UniProtKB"/>
</dbReference>
<dbReference type="GO" id="GO:0005789">
    <property type="term" value="C:endoplasmic reticulum membrane"/>
    <property type="evidence" value="ECO:0007669"/>
    <property type="project" value="UniProtKB-SubCell"/>
</dbReference>
<dbReference type="GO" id="GO:0017059">
    <property type="term" value="C:serine palmitoyltransferase complex"/>
    <property type="evidence" value="ECO:0000250"/>
    <property type="project" value="UniProtKB"/>
</dbReference>
<dbReference type="GO" id="GO:0004758">
    <property type="term" value="F:serine C-palmitoyltransferase activity"/>
    <property type="evidence" value="ECO:0000266"/>
    <property type="project" value="MGI"/>
</dbReference>
<dbReference type="GO" id="GO:0046513">
    <property type="term" value="P:ceramide biosynthetic process"/>
    <property type="evidence" value="ECO:0000266"/>
    <property type="project" value="MGI"/>
</dbReference>
<dbReference type="GO" id="GO:0008104">
    <property type="term" value="P:protein localization"/>
    <property type="evidence" value="ECO:0000250"/>
    <property type="project" value="UniProtKB"/>
</dbReference>
<dbReference type="GO" id="GO:0046512">
    <property type="term" value="P:sphingosine biosynthetic process"/>
    <property type="evidence" value="ECO:0007669"/>
    <property type="project" value="Ensembl"/>
</dbReference>
<dbReference type="InterPro" id="IPR024512">
    <property type="entry name" value="Ser_palmitoyltrfase_ssu-like"/>
</dbReference>
<dbReference type="InterPro" id="IPR051900">
    <property type="entry name" value="SPT_small_subunit"/>
</dbReference>
<dbReference type="PANTHER" id="PTHR47084">
    <property type="entry name" value="SERINE PALMITOYLTRANSFERASE SMALL SUBUNIT A"/>
    <property type="match status" value="1"/>
</dbReference>
<dbReference type="PANTHER" id="PTHR47084:SF1">
    <property type="entry name" value="SERINE PALMITOYLTRANSFERASE SMALL SUBUNIT A"/>
    <property type="match status" value="1"/>
</dbReference>
<dbReference type="Pfam" id="PF11779">
    <property type="entry name" value="SPT_ssu-like"/>
    <property type="match status" value="1"/>
</dbReference>
<sequence>MAGMALARAWKQMSWFYYQYLLVTALYMLEPWERTVFNSMLVSVVGMALYTGYVFMPQHIMAILHYFEIVQ</sequence>
<proteinExistence type="inferred from homology"/>
<evidence type="ECO:0000250" key="1">
    <source>
        <dbReference type="UniProtKB" id="Q969W0"/>
    </source>
</evidence>
<evidence type="ECO:0000255" key="2"/>
<evidence type="ECO:0000305" key="3"/>
<evidence type="ECO:0000312" key="4">
    <source>
        <dbReference type="MGI" id="MGI:1913399"/>
    </source>
</evidence>